<evidence type="ECO:0000305" key="1"/>
<protein>
    <recommendedName>
        <fullName>Nodulation protein N</fullName>
    </recommendedName>
</protein>
<organism>
    <name type="scientific">Rhizobium meliloti (strain 1021)</name>
    <name type="common">Ensifer meliloti</name>
    <name type="synonym">Sinorhizobium meliloti</name>
    <dbReference type="NCBI Taxonomy" id="266834"/>
    <lineage>
        <taxon>Bacteria</taxon>
        <taxon>Pseudomonadati</taxon>
        <taxon>Pseudomonadota</taxon>
        <taxon>Alphaproteobacteria</taxon>
        <taxon>Hyphomicrobiales</taxon>
        <taxon>Rhizobiaceae</taxon>
        <taxon>Sinorhizobium/Ensifer group</taxon>
        <taxon>Sinorhizobium</taxon>
    </lineage>
</organism>
<reference key="1">
    <citation type="journal article" date="1991" name="Mol. Gen. Genet.">
        <title>Six nodulation genes of nod box locus 4 in Rhizobium meliloti are involved in nodulation signal production: nodM codes for D-glucosamine synthetase.</title>
        <authorList>
            <person name="Baev N."/>
            <person name="Endre G."/>
            <person name="Petrovics G."/>
            <person name="Banfalvi Z."/>
            <person name="Kondorosi A."/>
        </authorList>
    </citation>
    <scope>NUCLEOTIDE SEQUENCE [GENOMIC DNA]</scope>
    <source>
        <strain>AK631</strain>
    </source>
</reference>
<reference key="2">
    <citation type="journal article" date="2001" name="Proc. Natl. Acad. Sci. U.S.A.">
        <title>Nucleotide sequence and predicted functions of the entire Sinorhizobium meliloti pSymA megaplasmid.</title>
        <authorList>
            <person name="Barnett M.J."/>
            <person name="Fisher R.F."/>
            <person name="Jones T."/>
            <person name="Komp C."/>
            <person name="Abola A.P."/>
            <person name="Barloy-Hubler F."/>
            <person name="Bowser L."/>
            <person name="Capela D."/>
            <person name="Galibert F."/>
            <person name="Gouzy J."/>
            <person name="Gurjal M."/>
            <person name="Hong A."/>
            <person name="Huizar L."/>
            <person name="Hyman R.W."/>
            <person name="Kahn D."/>
            <person name="Kahn M.L."/>
            <person name="Kalman S."/>
            <person name="Keating D.H."/>
            <person name="Palm C."/>
            <person name="Peck M.C."/>
            <person name="Surzycki R."/>
            <person name="Wells D.H."/>
            <person name="Yeh K.-C."/>
            <person name="Davis R.W."/>
            <person name="Federspiel N.A."/>
            <person name="Long S.R."/>
        </authorList>
    </citation>
    <scope>NUCLEOTIDE SEQUENCE [LARGE SCALE GENOMIC DNA]</scope>
    <source>
        <strain>1021</strain>
    </source>
</reference>
<reference key="3">
    <citation type="journal article" date="2001" name="Science">
        <title>The composite genome of the legume symbiont Sinorhizobium meliloti.</title>
        <authorList>
            <person name="Galibert F."/>
            <person name="Finan T.M."/>
            <person name="Long S.R."/>
            <person name="Puehler A."/>
            <person name="Abola P."/>
            <person name="Ampe F."/>
            <person name="Barloy-Hubler F."/>
            <person name="Barnett M.J."/>
            <person name="Becker A."/>
            <person name="Boistard P."/>
            <person name="Bothe G."/>
            <person name="Boutry M."/>
            <person name="Bowser L."/>
            <person name="Buhrmester J."/>
            <person name="Cadieu E."/>
            <person name="Capela D."/>
            <person name="Chain P."/>
            <person name="Cowie A."/>
            <person name="Davis R.W."/>
            <person name="Dreano S."/>
            <person name="Federspiel N.A."/>
            <person name="Fisher R.F."/>
            <person name="Gloux S."/>
            <person name="Godrie T."/>
            <person name="Goffeau A."/>
            <person name="Golding B."/>
            <person name="Gouzy J."/>
            <person name="Gurjal M."/>
            <person name="Hernandez-Lucas I."/>
            <person name="Hong A."/>
            <person name="Huizar L."/>
            <person name="Hyman R.W."/>
            <person name="Jones T."/>
            <person name="Kahn D."/>
            <person name="Kahn M.L."/>
            <person name="Kalman S."/>
            <person name="Keating D.H."/>
            <person name="Kiss E."/>
            <person name="Komp C."/>
            <person name="Lelaure V."/>
            <person name="Masuy D."/>
            <person name="Palm C."/>
            <person name="Peck M.C."/>
            <person name="Pohl T.M."/>
            <person name="Portetelle D."/>
            <person name="Purnelle B."/>
            <person name="Ramsperger U."/>
            <person name="Surzycki R."/>
            <person name="Thebault P."/>
            <person name="Vandenbol M."/>
            <person name="Vorhoelter F.J."/>
            <person name="Weidner S."/>
            <person name="Wells D.H."/>
            <person name="Wong K."/>
            <person name="Yeh K.-C."/>
            <person name="Batut J."/>
        </authorList>
    </citation>
    <scope>NUCLEOTIDE SEQUENCE [LARGE SCALE GENOMIC DNA]</scope>
    <source>
        <strain>1021</strain>
    </source>
</reference>
<feature type="chain" id="PRO_0000096910" description="Nodulation protein N">
    <location>
        <begin position="1"/>
        <end position="161"/>
    </location>
</feature>
<feature type="domain" description="MaoC-like">
    <location>
        <begin position="10"/>
        <end position="130"/>
    </location>
</feature>
<feature type="sequence conflict" description="In Ref. 1; CAA41490." evidence="1" ref="1">
    <original>KWI</original>
    <variation>EMD</variation>
    <location>
        <begin position="21"/>
        <end position="23"/>
    </location>
</feature>
<feature type="sequence conflict" description="In Ref. 1; CAA41490." evidence="1" ref="1">
    <original>Q</original>
    <variation>M</variation>
    <location>
        <position position="41"/>
    </location>
</feature>
<feature type="sequence conflict" description="In Ref. 1; CAA41490." evidence="1" ref="1">
    <original>A</original>
    <variation>T</variation>
    <location>
        <position position="50"/>
    </location>
</feature>
<feature type="sequence conflict" description="In Ref. 1; CAA41490." evidence="1" ref="1">
    <original>A</original>
    <variation>T</variation>
    <location>
        <position position="59"/>
    </location>
</feature>
<feature type="sequence conflict" description="In Ref. 1; CAA41490." evidence="1" ref="1">
    <original>TL</original>
    <variation>IP</variation>
    <location>
        <begin position="66"/>
        <end position="67"/>
    </location>
</feature>
<feature type="sequence conflict" description="In Ref. 1; CAA41490." evidence="1" ref="1">
    <original>F</original>
    <variation>I</variation>
    <location>
        <position position="81"/>
    </location>
</feature>
<feature type="sequence conflict" description="In Ref. 1; CAA41490." evidence="1" ref="1">
    <original>GFD</original>
    <variation>VS</variation>
    <location>
        <begin position="91"/>
        <end position="93"/>
    </location>
</feature>
<feature type="sequence conflict" description="In Ref. 1; CAA41490." evidence="1" ref="1">
    <original>H</original>
    <variation>R</variation>
    <location>
        <position position="108"/>
    </location>
</feature>
<feature type="sequence conflict" description="In Ref. 1; CAA41490." evidence="1" ref="1">
    <original>R</original>
    <variation>P</variation>
    <location>
        <position position="117"/>
    </location>
</feature>
<feature type="sequence conflict" description="In Ref. 1; CAA41490." evidence="1" ref="1">
    <original>I</original>
    <variation>M</variation>
    <location>
        <position position="123"/>
    </location>
</feature>
<feature type="sequence conflict" description="In Ref. 1; CAA41490." evidence="1" ref="1">
    <original>AG</original>
    <variation>RR</variation>
    <location>
        <begin position="160"/>
        <end position="161"/>
    </location>
</feature>
<comment type="function">
    <text>Involved in the production of the root hair deformation (HAD) factor specifically on medicago.</text>
</comment>
<comment type="similarity">
    <text evidence="1">To the R.leguminosarum biovar viciae counterpart.</text>
</comment>
<name>NODN_RHIME</name>
<proteinExistence type="predicted"/>
<gene>
    <name type="primary">nodN</name>
    <name type="ordered locus">RA0479</name>
    <name type="ORF">SMa0874</name>
</gene>
<sequence length="161" mass="17859">MHEISLSDVSSLVGQELGTSKWITIDQAMINLFADATHDHQFIHVDPNRAAAESPFGGAIAHGFLTLALLSVMNFSGMPKFREQTMGINYGFDRVRFISPVRTGSRVHGRFVLSDCRLRRASILMTAYNVTVEIENENKPALTANWIAIAQFNPKDRPKAG</sequence>
<dbReference type="EMBL" id="X58632">
    <property type="protein sequence ID" value="CAA41490.1"/>
    <property type="molecule type" value="Genomic_DNA"/>
</dbReference>
<dbReference type="EMBL" id="AE006469">
    <property type="protein sequence ID" value="AAK65137.1"/>
    <property type="molecule type" value="Genomic_DNA"/>
</dbReference>
<dbReference type="PIR" id="G95321">
    <property type="entry name" value="G95321"/>
</dbReference>
<dbReference type="PIR" id="S16566">
    <property type="entry name" value="S16566"/>
</dbReference>
<dbReference type="RefSeq" id="NP_435725.1">
    <property type="nucleotide sequence ID" value="NC_003037.1"/>
</dbReference>
<dbReference type="RefSeq" id="WP_010967459.1">
    <property type="nucleotide sequence ID" value="NC_003037.1"/>
</dbReference>
<dbReference type="SMR" id="P25200"/>
<dbReference type="EnsemblBacteria" id="AAK65137">
    <property type="protein sequence ID" value="AAK65137"/>
    <property type="gene ID" value="SMa0874"/>
</dbReference>
<dbReference type="KEGG" id="sme:SMa0874"/>
<dbReference type="PATRIC" id="fig|266834.11.peg.489"/>
<dbReference type="HOGENOM" id="CLU_108911_1_0_5"/>
<dbReference type="OrthoDB" id="9801735at2"/>
<dbReference type="Proteomes" id="UP000001976">
    <property type="component" value="Plasmid pSymA"/>
</dbReference>
<dbReference type="CDD" id="cd03450">
    <property type="entry name" value="NodN"/>
    <property type="match status" value="1"/>
</dbReference>
<dbReference type="Gene3D" id="3.10.129.10">
    <property type="entry name" value="Hotdog Thioesterase"/>
    <property type="match status" value="1"/>
</dbReference>
<dbReference type="InterPro" id="IPR029069">
    <property type="entry name" value="HotDog_dom_sf"/>
</dbReference>
<dbReference type="InterPro" id="IPR002539">
    <property type="entry name" value="MaoC-like_dom"/>
</dbReference>
<dbReference type="InterPro" id="IPR039375">
    <property type="entry name" value="NodN-like"/>
</dbReference>
<dbReference type="PANTHER" id="PTHR42993">
    <property type="entry name" value="MAOC-LIKE DEHYDRATASE DOMAIN-CONTAINING PROTEIN"/>
    <property type="match status" value="1"/>
</dbReference>
<dbReference type="PANTHER" id="PTHR42993:SF1">
    <property type="entry name" value="MAOC-LIKE DEHYDRATASE DOMAIN-CONTAINING PROTEIN"/>
    <property type="match status" value="1"/>
</dbReference>
<dbReference type="Pfam" id="PF01575">
    <property type="entry name" value="MaoC_dehydratas"/>
    <property type="match status" value="1"/>
</dbReference>
<dbReference type="SUPFAM" id="SSF54637">
    <property type="entry name" value="Thioesterase/thiol ester dehydrase-isomerase"/>
    <property type="match status" value="1"/>
</dbReference>
<keyword id="KW-0536">Nodulation</keyword>
<keyword id="KW-0614">Plasmid</keyword>
<keyword id="KW-1185">Reference proteome</keyword>
<accession>P25200</accession>
<geneLocation type="plasmid">
    <name>pSymA</name>
    <name>megaplasmid 1</name>
</geneLocation>